<protein>
    <recommendedName>
        <fullName>Candidapepsin-2</fullName>
        <ecNumber>3.4.23.24</ecNumber>
    </recommendedName>
    <alternativeName>
        <fullName>ACP 2</fullName>
    </alternativeName>
    <alternativeName>
        <fullName>Aspartate protease 2</fullName>
    </alternativeName>
    <alternativeName>
        <fullName>Secreted aspartic protease 2</fullName>
    </alternativeName>
</protein>
<keyword id="KW-0064">Aspartyl protease</keyword>
<keyword id="KW-0165">Cleavage on pair of basic residues</keyword>
<keyword id="KW-0903">Direct protein sequencing</keyword>
<keyword id="KW-1015">Disulfide bond</keyword>
<keyword id="KW-0325">Glycoprotein</keyword>
<keyword id="KW-0378">Hydrolase</keyword>
<keyword id="KW-0645">Protease</keyword>
<keyword id="KW-0964">Secreted</keyword>
<keyword id="KW-0732">Signal</keyword>
<keyword id="KW-0865">Zymogen</keyword>
<sequence>MFLKNIFIGLAIALLVDATPTTTKRSAGFVALDFSVVKTPKAFPVTNGQEGKTSKRQAVPVTLHNEQVTYAADITVGSNNQKLNVIVDTGSSDLWVPDVNVDCQVTYSDQTADFCKQKGTYDPSGSSASQDLNTPFKIGYGDGSSSQGTLYKDTVGFGGVSIKNQVLADVDSTSIDQGILGVGYKTNEAGGSYDNVPVTLKKQGVIAKNAYSLYLNSPDAATGQIIFGGVDNAKYSGSLIALPVTSDRELRISLGSVEVSGKTINTDNVDVLLDSGTTITYLQQDLADQIIKAFNGKLTQDSNGNSFYEVDCNLSGDVVFNFSKNAKISVPASEFAASLQGDDGQPYDKCQLLFDVNDANILGDNFLRSAYIVYDLDNNEISLAQVKYTSASSISALT</sequence>
<comment type="catalytic activity">
    <reaction>
        <text>Preferential cleavage at the carboxyl of hydrophobic amino acids, but fails to cleave 15-Leu-|-Tyr-16, 16-Tyr-|-Leu-17 and 24-Phe-|-Phe-25 of insulin B chain. Activates trypsinogen, and degrades keratin.</text>
        <dbReference type="EC" id="3.4.23.24"/>
    </reaction>
</comment>
<comment type="subunit">
    <text evidence="1">Monomer.</text>
</comment>
<comment type="subcellular location">
    <subcellularLocation>
        <location>Secreted</location>
    </subcellularLocation>
</comment>
<comment type="PTM">
    <text evidence="1">O-glycosylated.</text>
</comment>
<comment type="miscellaneous">
    <text>Expressed both in W (white) and in O (opaque) cells of strain WO-1.</text>
</comment>
<comment type="similarity">
    <text evidence="7">Belongs to the peptidase A1 family.</text>
</comment>
<evidence type="ECO:0000250" key="1"/>
<evidence type="ECO:0000250" key="2">
    <source>
        <dbReference type="UniProtKB" id="P0CY29"/>
    </source>
</evidence>
<evidence type="ECO:0000255" key="3"/>
<evidence type="ECO:0000255" key="4">
    <source>
        <dbReference type="PROSITE-ProRule" id="PRU01103"/>
    </source>
</evidence>
<evidence type="ECO:0000255" key="5">
    <source>
        <dbReference type="PROSITE-ProRule" id="PRU10094"/>
    </source>
</evidence>
<evidence type="ECO:0000269" key="6">
    <source>
    </source>
</evidence>
<evidence type="ECO:0000305" key="7"/>
<name>CARP2_CANAW</name>
<feature type="signal peptide" evidence="3">
    <location>
        <begin position="1"/>
        <end position="18"/>
    </location>
</feature>
<feature type="propeptide" id="PRO_0000413050" description="Activation peptide" evidence="6">
    <location>
        <begin position="19"/>
        <end position="56"/>
    </location>
</feature>
<feature type="chain" id="PRO_0000413051" description="Candidapepsin-2">
    <location>
        <begin position="57"/>
        <end position="398"/>
    </location>
</feature>
<feature type="domain" description="Peptidase A1" evidence="4">
    <location>
        <begin position="70"/>
        <end position="384"/>
    </location>
</feature>
<feature type="active site" evidence="5">
    <location>
        <position position="88"/>
    </location>
</feature>
<feature type="active site" evidence="5">
    <location>
        <position position="274"/>
    </location>
</feature>
<feature type="binding site" evidence="2">
    <location>
        <begin position="88"/>
        <end position="90"/>
    </location>
    <ligand>
        <name>pepstatin A</name>
        <dbReference type="ChEBI" id="CHEBI:190525"/>
        <note>inhibitor</note>
    </ligand>
</feature>
<feature type="binding site" evidence="2">
    <location>
        <begin position="141"/>
        <end position="142"/>
    </location>
    <ligand>
        <name>pepstatin A</name>
        <dbReference type="ChEBI" id="CHEBI:190525"/>
        <note>inhibitor</note>
    </ligand>
</feature>
<feature type="binding site" evidence="2">
    <location>
        <begin position="274"/>
        <end position="278"/>
    </location>
    <ligand>
        <name>pepstatin A</name>
        <dbReference type="ChEBI" id="CHEBI:190525"/>
        <note>inhibitor</note>
    </ligand>
</feature>
<feature type="glycosylation site" description="N-linked (GlcNAc...) asparagine" evidence="3">
    <location>
        <position position="313"/>
    </location>
</feature>
<feature type="glycosylation site" description="N-linked (GlcNAc...) asparagine" evidence="3">
    <location>
        <position position="321"/>
    </location>
</feature>
<feature type="disulfide bond" evidence="1">
    <location>
        <begin position="103"/>
        <end position="115"/>
    </location>
</feature>
<feature type="disulfide bond" evidence="1">
    <location>
        <begin position="312"/>
        <end position="350"/>
    </location>
</feature>
<proteinExistence type="evidence at protein level"/>
<accession>C4YMJ3</accession>
<accession>P28871</accession>
<accession>P43097</accession>
<dbReference type="EC" id="3.4.23.24"/>
<dbReference type="EMBL" id="CM000309">
    <property type="protein sequence ID" value="EEQ43824.1"/>
    <property type="molecule type" value="Genomic_DNA"/>
</dbReference>
<dbReference type="SMR" id="C4YMJ3"/>
<dbReference type="Allergome" id="1436">
    <property type="allergen name" value="Cand a CAAP"/>
</dbReference>
<dbReference type="MEROPS" id="A01.060"/>
<dbReference type="GlyCosmos" id="C4YMJ3">
    <property type="glycosylation" value="2 sites, No reported glycans"/>
</dbReference>
<dbReference type="PaxDb" id="5476-C4YMJ3"/>
<dbReference type="VEuPathDB" id="FungiDB:CAWG_02075"/>
<dbReference type="HOGENOM" id="CLU_013253_9_1_1"/>
<dbReference type="OMA" id="TEYGFEG"/>
<dbReference type="OrthoDB" id="20489at766764"/>
<dbReference type="Proteomes" id="UP000001429">
    <property type="component" value="Chromosome R"/>
</dbReference>
<dbReference type="GO" id="GO:0005576">
    <property type="term" value="C:extracellular region"/>
    <property type="evidence" value="ECO:0007669"/>
    <property type="project" value="UniProtKB-SubCell"/>
</dbReference>
<dbReference type="GO" id="GO:0004190">
    <property type="term" value="F:aspartic-type endopeptidase activity"/>
    <property type="evidence" value="ECO:0007669"/>
    <property type="project" value="UniProtKB-KW"/>
</dbReference>
<dbReference type="GO" id="GO:0006508">
    <property type="term" value="P:proteolysis"/>
    <property type="evidence" value="ECO:0007669"/>
    <property type="project" value="UniProtKB-KW"/>
</dbReference>
<dbReference type="CDD" id="cd05474">
    <property type="entry name" value="SAP_like"/>
    <property type="match status" value="1"/>
</dbReference>
<dbReference type="FunFam" id="2.40.70.10:FF:000011">
    <property type="entry name" value="Aspartic protease"/>
    <property type="match status" value="1"/>
</dbReference>
<dbReference type="FunFam" id="2.40.70.10:FF:000023">
    <property type="entry name" value="Aspartic protease"/>
    <property type="match status" value="1"/>
</dbReference>
<dbReference type="Gene3D" id="2.40.70.10">
    <property type="entry name" value="Acid Proteases"/>
    <property type="match status" value="2"/>
</dbReference>
<dbReference type="InterPro" id="IPR001461">
    <property type="entry name" value="Aspartic_peptidase_A1"/>
</dbReference>
<dbReference type="InterPro" id="IPR001969">
    <property type="entry name" value="Aspartic_peptidase_AS"/>
</dbReference>
<dbReference type="InterPro" id="IPR033121">
    <property type="entry name" value="PEPTIDASE_A1"/>
</dbReference>
<dbReference type="InterPro" id="IPR021109">
    <property type="entry name" value="Peptidase_aspartic_dom_sf"/>
</dbReference>
<dbReference type="InterPro" id="IPR033876">
    <property type="entry name" value="SAP-like"/>
</dbReference>
<dbReference type="PANTHER" id="PTHR47966:SF65">
    <property type="entry name" value="ASPARTIC-TYPE ENDOPEPTIDASE"/>
    <property type="match status" value="1"/>
</dbReference>
<dbReference type="PANTHER" id="PTHR47966">
    <property type="entry name" value="BETA-SITE APP-CLEAVING ENZYME, ISOFORM A-RELATED"/>
    <property type="match status" value="1"/>
</dbReference>
<dbReference type="Pfam" id="PF00026">
    <property type="entry name" value="Asp"/>
    <property type="match status" value="1"/>
</dbReference>
<dbReference type="PRINTS" id="PR00792">
    <property type="entry name" value="PEPSIN"/>
</dbReference>
<dbReference type="SUPFAM" id="SSF50630">
    <property type="entry name" value="Acid proteases"/>
    <property type="match status" value="1"/>
</dbReference>
<dbReference type="PROSITE" id="PS00141">
    <property type="entry name" value="ASP_PROTEASE"/>
    <property type="match status" value="2"/>
</dbReference>
<dbReference type="PROSITE" id="PS51767">
    <property type="entry name" value="PEPTIDASE_A1"/>
    <property type="match status" value="1"/>
</dbReference>
<organism>
    <name type="scientific">Candida albicans (strain WO-1)</name>
    <name type="common">Yeast</name>
    <dbReference type="NCBI Taxonomy" id="294748"/>
    <lineage>
        <taxon>Eukaryota</taxon>
        <taxon>Fungi</taxon>
        <taxon>Dikarya</taxon>
        <taxon>Ascomycota</taxon>
        <taxon>Saccharomycotina</taxon>
        <taxon>Pichiomycetes</taxon>
        <taxon>Debaryomycetaceae</taxon>
        <taxon>Candida/Lodderomyces clade</taxon>
        <taxon>Candida</taxon>
    </lineage>
</organism>
<gene>
    <name type="primary">SAP2</name>
    <name type="synonym">PRA11</name>
    <name type="synonym">PRA2</name>
    <name type="ORF">CAWG_02075</name>
</gene>
<reference key="1">
    <citation type="journal article" date="2009" name="Nature">
        <title>Evolution of pathogenicity and sexual reproduction in eight Candida genomes.</title>
        <authorList>
            <person name="Butler G."/>
            <person name="Rasmussen M.D."/>
            <person name="Lin M.F."/>
            <person name="Santos M.A.S."/>
            <person name="Sakthikumar S."/>
            <person name="Munro C.A."/>
            <person name="Rheinbay E."/>
            <person name="Grabherr M."/>
            <person name="Forche A."/>
            <person name="Reedy J.L."/>
            <person name="Agrafioti I."/>
            <person name="Arnaud M.B."/>
            <person name="Bates S."/>
            <person name="Brown A.J.P."/>
            <person name="Brunke S."/>
            <person name="Costanzo M.C."/>
            <person name="Fitzpatrick D.A."/>
            <person name="de Groot P.W.J."/>
            <person name="Harris D."/>
            <person name="Hoyer L.L."/>
            <person name="Hube B."/>
            <person name="Klis F.M."/>
            <person name="Kodira C."/>
            <person name="Lennard N."/>
            <person name="Logue M.E."/>
            <person name="Martin R."/>
            <person name="Neiman A.M."/>
            <person name="Nikolaou E."/>
            <person name="Quail M.A."/>
            <person name="Quinn J."/>
            <person name="Santos M.C."/>
            <person name="Schmitzberger F.F."/>
            <person name="Sherlock G."/>
            <person name="Shah P."/>
            <person name="Silverstein K.A.T."/>
            <person name="Skrzypek M.S."/>
            <person name="Soll D."/>
            <person name="Staggs R."/>
            <person name="Stansfield I."/>
            <person name="Stumpf M.P.H."/>
            <person name="Sudbery P.E."/>
            <person name="Srikantha T."/>
            <person name="Zeng Q."/>
            <person name="Berman J."/>
            <person name="Berriman M."/>
            <person name="Heitman J."/>
            <person name="Gow N.A.R."/>
            <person name="Lorenz M.C."/>
            <person name="Birren B.W."/>
            <person name="Kellis M."/>
            <person name="Cuomo C.A."/>
        </authorList>
    </citation>
    <scope>NUCLEOTIDE SEQUENCE [LARGE SCALE GENOMIC DNA]</scope>
    <source>
        <strain>WO-1</strain>
    </source>
</reference>
<reference key="2">
    <citation type="journal article" date="1993" name="J. Bacteriol.">
        <title>Three distinct secreted aspartyl proteinases in Candida albicans.</title>
        <authorList>
            <person name="White T.C."/>
            <person name="Miyasaki S.H."/>
            <person name="Agabian N."/>
        </authorList>
    </citation>
    <scope>PROTEIN SEQUENCE OF 57-71</scope>
    <source>
        <strain>WO-1</strain>
    </source>
</reference>